<gene>
    <name type="primary">S</name>
</gene>
<organism>
    <name type="scientific">Zygosaccharomyces rouxii</name>
    <dbReference type="NCBI Taxonomy" id="4956"/>
    <lineage>
        <taxon>Eukaryota</taxon>
        <taxon>Fungi</taxon>
        <taxon>Dikarya</taxon>
        <taxon>Ascomycota</taxon>
        <taxon>Saccharomycotina</taxon>
        <taxon>Saccharomycetes</taxon>
        <taxon>Saccharomycetales</taxon>
        <taxon>Saccharomycetaceae</taxon>
        <taxon>Zygosaccharomyces</taxon>
    </lineage>
</organism>
<accession>P13782</accession>
<reference key="1">
    <citation type="journal article" date="1985" name="J. Mol. Biol.">
        <title>Molecular and functional organization of yeast plasmid pSR1.</title>
        <authorList>
            <person name="Araki H."/>
            <person name="Jearnpipatkul A."/>
            <person name="Tatsumi H."/>
            <person name="Sakurai T."/>
            <person name="Ushio T.S.H."/>
            <person name="Muta T."/>
            <person name="Oshima Y."/>
        </authorList>
    </citation>
    <scope>NUCLEOTIDE SEQUENCE [GENOMIC DNA]</scope>
</reference>
<feature type="chain" id="PRO_0000150903" description="Trans-acting factor C">
    <location>
        <begin position="1"/>
        <end position="233"/>
    </location>
</feature>
<feature type="region of interest" description="Disordered" evidence="1">
    <location>
        <begin position="195"/>
        <end position="233"/>
    </location>
</feature>
<feature type="compositionally biased region" description="Basic residues" evidence="1">
    <location>
        <begin position="223"/>
        <end position="233"/>
    </location>
</feature>
<protein>
    <recommendedName>
        <fullName>Trans-acting factor C</fullName>
    </recommendedName>
    <alternativeName>
        <fullName>REP2</fullName>
    </alternativeName>
</protein>
<evidence type="ECO:0000256" key="1">
    <source>
        <dbReference type="SAM" id="MobiDB-lite"/>
    </source>
</evidence>
<proteinExistence type="predicted"/>
<dbReference type="EMBL" id="X02398">
    <property type="protein sequence ID" value="CAA26246.1"/>
    <property type="molecule type" value="Genomic_DNA"/>
</dbReference>
<dbReference type="PIR" id="S28356">
    <property type="entry name" value="S28356"/>
</dbReference>
<dbReference type="GO" id="GO:0030541">
    <property type="term" value="P:plasmid partitioning"/>
    <property type="evidence" value="ECO:0007669"/>
    <property type="project" value="UniProtKB-KW"/>
</dbReference>
<geneLocation type="plasmid">
    <name>pSR1</name>
</geneLocation>
<name>REP2_ZYGRO</name>
<comment type="function">
    <text>Plasmid partition require REP1, REP2, and a cis-acting DNA sequence (known as STB).</text>
</comment>
<keyword id="KW-0614">Plasmid</keyword>
<keyword id="KW-0616">Plasmid partition</keyword>
<sequence length="233" mass="26455">MQIQNSIRATLESNHGLLDVDYVANLLENLLRTWKHGKPTIKVREAIQLAHAKSIKVISLWPQETCSFRNFDGNPEDDPNVPWLVRRENSSGPFTQPGSETSSLEQLLNGLGCIARILRENTNTVEARRAIDDHFCKIKKPAKLTMVGIQNIKKSMKRLLVNMSPIEGLEELFFQARSLGVPSHLVESVRPPVDIHSGNMHRTGISPRKRTLPEPFDESNTISHRRTRRNTKQ</sequence>